<feature type="chain" id="PRO_0000167484" description="Ribosome-recycling factor">
    <location>
        <begin position="1"/>
        <end position="185"/>
    </location>
</feature>
<evidence type="ECO:0000255" key="1">
    <source>
        <dbReference type="HAMAP-Rule" id="MF_00040"/>
    </source>
</evidence>
<dbReference type="EMBL" id="AL596168">
    <property type="protein sequence ID" value="CAC96582.1"/>
    <property type="molecule type" value="Genomic_DNA"/>
</dbReference>
<dbReference type="PIR" id="AF1601">
    <property type="entry name" value="AF1601"/>
</dbReference>
<dbReference type="RefSeq" id="WP_003771660.1">
    <property type="nucleotide sequence ID" value="NC_003212.1"/>
</dbReference>
<dbReference type="SMR" id="Q92C40"/>
<dbReference type="STRING" id="272626.gene:17565682"/>
<dbReference type="GeneID" id="93234731"/>
<dbReference type="KEGG" id="lin:frr"/>
<dbReference type="eggNOG" id="COG0233">
    <property type="taxonomic scope" value="Bacteria"/>
</dbReference>
<dbReference type="HOGENOM" id="CLU_073981_2_0_9"/>
<dbReference type="OrthoDB" id="9804006at2"/>
<dbReference type="Proteomes" id="UP000002513">
    <property type="component" value="Chromosome"/>
</dbReference>
<dbReference type="GO" id="GO:0005737">
    <property type="term" value="C:cytoplasm"/>
    <property type="evidence" value="ECO:0007669"/>
    <property type="project" value="UniProtKB-SubCell"/>
</dbReference>
<dbReference type="GO" id="GO:0043023">
    <property type="term" value="F:ribosomal large subunit binding"/>
    <property type="evidence" value="ECO:0007669"/>
    <property type="project" value="TreeGrafter"/>
</dbReference>
<dbReference type="GO" id="GO:0006415">
    <property type="term" value="P:translational termination"/>
    <property type="evidence" value="ECO:0007669"/>
    <property type="project" value="UniProtKB-UniRule"/>
</dbReference>
<dbReference type="CDD" id="cd00520">
    <property type="entry name" value="RRF"/>
    <property type="match status" value="1"/>
</dbReference>
<dbReference type="FunFam" id="1.10.132.20:FF:000001">
    <property type="entry name" value="Ribosome-recycling factor"/>
    <property type="match status" value="1"/>
</dbReference>
<dbReference type="FunFam" id="3.30.1360.40:FF:000001">
    <property type="entry name" value="Ribosome-recycling factor"/>
    <property type="match status" value="1"/>
</dbReference>
<dbReference type="Gene3D" id="3.30.1360.40">
    <property type="match status" value="1"/>
</dbReference>
<dbReference type="Gene3D" id="1.10.132.20">
    <property type="entry name" value="Ribosome-recycling factor"/>
    <property type="match status" value="1"/>
</dbReference>
<dbReference type="HAMAP" id="MF_00040">
    <property type="entry name" value="RRF"/>
    <property type="match status" value="1"/>
</dbReference>
<dbReference type="InterPro" id="IPR002661">
    <property type="entry name" value="Ribosome_recyc_fac"/>
</dbReference>
<dbReference type="InterPro" id="IPR023584">
    <property type="entry name" value="Ribosome_recyc_fac_dom"/>
</dbReference>
<dbReference type="InterPro" id="IPR036191">
    <property type="entry name" value="RRF_sf"/>
</dbReference>
<dbReference type="NCBIfam" id="TIGR00496">
    <property type="entry name" value="frr"/>
    <property type="match status" value="1"/>
</dbReference>
<dbReference type="PANTHER" id="PTHR20982:SF3">
    <property type="entry name" value="MITOCHONDRIAL RIBOSOME RECYCLING FACTOR PSEUDO 1"/>
    <property type="match status" value="1"/>
</dbReference>
<dbReference type="PANTHER" id="PTHR20982">
    <property type="entry name" value="RIBOSOME RECYCLING FACTOR"/>
    <property type="match status" value="1"/>
</dbReference>
<dbReference type="Pfam" id="PF01765">
    <property type="entry name" value="RRF"/>
    <property type="match status" value="1"/>
</dbReference>
<dbReference type="SUPFAM" id="SSF55194">
    <property type="entry name" value="Ribosome recycling factor, RRF"/>
    <property type="match status" value="1"/>
</dbReference>
<organism>
    <name type="scientific">Listeria innocua serovar 6a (strain ATCC BAA-680 / CLIP 11262)</name>
    <dbReference type="NCBI Taxonomy" id="272626"/>
    <lineage>
        <taxon>Bacteria</taxon>
        <taxon>Bacillati</taxon>
        <taxon>Bacillota</taxon>
        <taxon>Bacilli</taxon>
        <taxon>Bacillales</taxon>
        <taxon>Listeriaceae</taxon>
        <taxon>Listeria</taxon>
    </lineage>
</organism>
<proteinExistence type="inferred from homology"/>
<gene>
    <name evidence="1" type="primary">frr</name>
    <name type="ordered locus">lin1351</name>
</gene>
<reference key="1">
    <citation type="journal article" date="2001" name="Science">
        <title>Comparative genomics of Listeria species.</title>
        <authorList>
            <person name="Glaser P."/>
            <person name="Frangeul L."/>
            <person name="Buchrieser C."/>
            <person name="Rusniok C."/>
            <person name="Amend A."/>
            <person name="Baquero F."/>
            <person name="Berche P."/>
            <person name="Bloecker H."/>
            <person name="Brandt P."/>
            <person name="Chakraborty T."/>
            <person name="Charbit A."/>
            <person name="Chetouani F."/>
            <person name="Couve E."/>
            <person name="de Daruvar A."/>
            <person name="Dehoux P."/>
            <person name="Domann E."/>
            <person name="Dominguez-Bernal G."/>
            <person name="Duchaud E."/>
            <person name="Durant L."/>
            <person name="Dussurget O."/>
            <person name="Entian K.-D."/>
            <person name="Fsihi H."/>
            <person name="Garcia-del Portillo F."/>
            <person name="Garrido P."/>
            <person name="Gautier L."/>
            <person name="Goebel W."/>
            <person name="Gomez-Lopez N."/>
            <person name="Hain T."/>
            <person name="Hauf J."/>
            <person name="Jackson D."/>
            <person name="Jones L.-M."/>
            <person name="Kaerst U."/>
            <person name="Kreft J."/>
            <person name="Kuhn M."/>
            <person name="Kunst F."/>
            <person name="Kurapkat G."/>
            <person name="Madueno E."/>
            <person name="Maitournam A."/>
            <person name="Mata Vicente J."/>
            <person name="Ng E."/>
            <person name="Nedjari H."/>
            <person name="Nordsiek G."/>
            <person name="Novella S."/>
            <person name="de Pablos B."/>
            <person name="Perez-Diaz J.-C."/>
            <person name="Purcell R."/>
            <person name="Remmel B."/>
            <person name="Rose M."/>
            <person name="Schlueter T."/>
            <person name="Simoes N."/>
            <person name="Tierrez A."/>
            <person name="Vazquez-Boland J.-A."/>
            <person name="Voss H."/>
            <person name="Wehland J."/>
            <person name="Cossart P."/>
        </authorList>
    </citation>
    <scope>NUCLEOTIDE SEQUENCE [LARGE SCALE GENOMIC DNA]</scope>
    <source>
        <strain>ATCC BAA-680 / CLIP 11262</strain>
    </source>
</reference>
<sequence>MSKEVLSKSKEKMEKAEQALTRQLGTIRAGRANASLLDRLTVDYYGAATPVNQMASISVPEARMLLITPYDKTILGEIEKAILKSDLGLTPNNDGSVLRLSIPQLTEERRKELVKEVKKEAEEAKVAVRNIRREANEDLKKLEKNGDITEDDLRSYGEDVQKLTDESIKNIDSITKDKEAEILEV</sequence>
<protein>
    <recommendedName>
        <fullName evidence="1">Ribosome-recycling factor</fullName>
        <shortName evidence="1">RRF</shortName>
    </recommendedName>
    <alternativeName>
        <fullName evidence="1">Ribosome-releasing factor</fullName>
    </alternativeName>
</protein>
<comment type="function">
    <text evidence="1">Responsible for the release of ribosomes from messenger RNA at the termination of protein biosynthesis. May increase the efficiency of translation by recycling ribosomes from one round of translation to another.</text>
</comment>
<comment type="subcellular location">
    <subcellularLocation>
        <location evidence="1">Cytoplasm</location>
    </subcellularLocation>
</comment>
<comment type="similarity">
    <text evidence="1">Belongs to the RRF family.</text>
</comment>
<name>RRF_LISIN</name>
<keyword id="KW-0963">Cytoplasm</keyword>
<keyword id="KW-0648">Protein biosynthesis</keyword>
<accession>Q92C40</accession>